<organism>
    <name type="scientific">Bordetella avium (strain 197N)</name>
    <dbReference type="NCBI Taxonomy" id="360910"/>
    <lineage>
        <taxon>Bacteria</taxon>
        <taxon>Pseudomonadati</taxon>
        <taxon>Pseudomonadota</taxon>
        <taxon>Betaproteobacteria</taxon>
        <taxon>Burkholderiales</taxon>
        <taxon>Alcaligenaceae</taxon>
        <taxon>Bordetella</taxon>
    </lineage>
</organism>
<keyword id="KW-0030">Aminoacyl-tRNA synthetase</keyword>
<keyword id="KW-0067">ATP-binding</keyword>
<keyword id="KW-0963">Cytoplasm</keyword>
<keyword id="KW-0436">Ligase</keyword>
<keyword id="KW-0547">Nucleotide-binding</keyword>
<keyword id="KW-0648">Protein biosynthesis</keyword>
<keyword id="KW-1185">Reference proteome</keyword>
<name>SYE_BORA1</name>
<comment type="function">
    <text evidence="1">Catalyzes the attachment of glutamate to tRNA(Glu) in a two-step reaction: glutamate is first activated by ATP to form Glu-AMP and then transferred to the acceptor end of tRNA(Glu).</text>
</comment>
<comment type="catalytic activity">
    <reaction evidence="1">
        <text>tRNA(Glu) + L-glutamate + ATP = L-glutamyl-tRNA(Glu) + AMP + diphosphate</text>
        <dbReference type="Rhea" id="RHEA:23540"/>
        <dbReference type="Rhea" id="RHEA-COMP:9663"/>
        <dbReference type="Rhea" id="RHEA-COMP:9680"/>
        <dbReference type="ChEBI" id="CHEBI:29985"/>
        <dbReference type="ChEBI" id="CHEBI:30616"/>
        <dbReference type="ChEBI" id="CHEBI:33019"/>
        <dbReference type="ChEBI" id="CHEBI:78442"/>
        <dbReference type="ChEBI" id="CHEBI:78520"/>
        <dbReference type="ChEBI" id="CHEBI:456215"/>
        <dbReference type="EC" id="6.1.1.17"/>
    </reaction>
</comment>
<comment type="subunit">
    <text evidence="1">Monomer.</text>
</comment>
<comment type="subcellular location">
    <subcellularLocation>
        <location evidence="1">Cytoplasm</location>
    </subcellularLocation>
</comment>
<comment type="similarity">
    <text evidence="1">Belongs to the class-I aminoacyl-tRNA synthetase family. Glutamate--tRNA ligase type 1 subfamily.</text>
</comment>
<accession>Q2KUY9</accession>
<evidence type="ECO:0000255" key="1">
    <source>
        <dbReference type="HAMAP-Rule" id="MF_00022"/>
    </source>
</evidence>
<evidence type="ECO:0000256" key="2">
    <source>
        <dbReference type="SAM" id="MobiDB-lite"/>
    </source>
</evidence>
<sequence length="467" mass="51814">MTSPKPIRTRFAPSPTGFLHLGGARTALFSWAFARHHKGVFVLRIEDTDVERSTDAAVQAILDSMDWLGMQPDEGPFYQMKRLDRYSEVLQSMLAAGTAYHCYSSPEEVEAMREAARARGDKPRYDGTWRPEPGKTLPAIPEGRKPVIRFKNPQDGVTAWDDMVKGPVSFDNNELDDLIIARPDGTPTYNFCVVVDDWDMGMTHVIRGDDHVNNTPRQINILKALGADVPQYGHVPMILGPDGQKLSKRHGAVNVMEYDDQGYLPEAMVNYLARLGWSHGDAELFSREEFVRWFDTHHLSKSPSQWDPKKLNWVNAHYIKAMDNAELAQRVAPRIAKRGGDASRADLADIMGLFKDRAETLEQLADDAMLFCAPFQAAPQELATQHLTPAAREALAGFAAAAAGTEWTREAISALIKAQLAERGLKMPQLAIPLRVAVTGRAQTPAVDAVLVLLGKDVVLERLKALL</sequence>
<dbReference type="EC" id="6.1.1.17" evidence="1"/>
<dbReference type="EMBL" id="AM167904">
    <property type="protein sequence ID" value="CAJ50587.1"/>
    <property type="molecule type" value="Genomic_DNA"/>
</dbReference>
<dbReference type="RefSeq" id="WP_012418616.1">
    <property type="nucleotide sequence ID" value="NC_010645.1"/>
</dbReference>
<dbReference type="SMR" id="Q2KUY9"/>
<dbReference type="STRING" id="360910.BAV2977"/>
<dbReference type="GeneID" id="92933765"/>
<dbReference type="KEGG" id="bav:BAV2977"/>
<dbReference type="eggNOG" id="COG0008">
    <property type="taxonomic scope" value="Bacteria"/>
</dbReference>
<dbReference type="HOGENOM" id="CLU_015768_6_3_4"/>
<dbReference type="OrthoDB" id="9807503at2"/>
<dbReference type="Proteomes" id="UP000001977">
    <property type="component" value="Chromosome"/>
</dbReference>
<dbReference type="GO" id="GO:0005829">
    <property type="term" value="C:cytosol"/>
    <property type="evidence" value="ECO:0007669"/>
    <property type="project" value="TreeGrafter"/>
</dbReference>
<dbReference type="GO" id="GO:0005524">
    <property type="term" value="F:ATP binding"/>
    <property type="evidence" value="ECO:0007669"/>
    <property type="project" value="UniProtKB-UniRule"/>
</dbReference>
<dbReference type="GO" id="GO:0004818">
    <property type="term" value="F:glutamate-tRNA ligase activity"/>
    <property type="evidence" value="ECO:0007669"/>
    <property type="project" value="UniProtKB-UniRule"/>
</dbReference>
<dbReference type="GO" id="GO:0000049">
    <property type="term" value="F:tRNA binding"/>
    <property type="evidence" value="ECO:0007669"/>
    <property type="project" value="InterPro"/>
</dbReference>
<dbReference type="GO" id="GO:0008270">
    <property type="term" value="F:zinc ion binding"/>
    <property type="evidence" value="ECO:0007669"/>
    <property type="project" value="InterPro"/>
</dbReference>
<dbReference type="GO" id="GO:0006424">
    <property type="term" value="P:glutamyl-tRNA aminoacylation"/>
    <property type="evidence" value="ECO:0007669"/>
    <property type="project" value="UniProtKB-UniRule"/>
</dbReference>
<dbReference type="CDD" id="cd00808">
    <property type="entry name" value="GluRS_core"/>
    <property type="match status" value="1"/>
</dbReference>
<dbReference type="FunFam" id="3.40.50.620:FF:000007">
    <property type="entry name" value="Glutamate--tRNA ligase"/>
    <property type="match status" value="1"/>
</dbReference>
<dbReference type="Gene3D" id="1.10.10.350">
    <property type="match status" value="1"/>
</dbReference>
<dbReference type="Gene3D" id="3.40.50.620">
    <property type="entry name" value="HUPs"/>
    <property type="match status" value="1"/>
</dbReference>
<dbReference type="HAMAP" id="MF_00022">
    <property type="entry name" value="Glu_tRNA_synth_type1"/>
    <property type="match status" value="1"/>
</dbReference>
<dbReference type="InterPro" id="IPR045462">
    <property type="entry name" value="aa-tRNA-synth_I_cd-bd"/>
</dbReference>
<dbReference type="InterPro" id="IPR020751">
    <property type="entry name" value="aa-tRNA-synth_I_codon-bd_sub2"/>
</dbReference>
<dbReference type="InterPro" id="IPR001412">
    <property type="entry name" value="aa-tRNA-synth_I_CS"/>
</dbReference>
<dbReference type="InterPro" id="IPR008925">
    <property type="entry name" value="aa_tRNA-synth_I_cd-bd_sf"/>
</dbReference>
<dbReference type="InterPro" id="IPR004527">
    <property type="entry name" value="Glu-tRNA-ligase_bac/mito"/>
</dbReference>
<dbReference type="InterPro" id="IPR000924">
    <property type="entry name" value="Glu/Gln-tRNA-synth"/>
</dbReference>
<dbReference type="InterPro" id="IPR020058">
    <property type="entry name" value="Glu/Gln-tRNA-synth_Ib_cat-dom"/>
</dbReference>
<dbReference type="InterPro" id="IPR049940">
    <property type="entry name" value="GluQ/Sye"/>
</dbReference>
<dbReference type="InterPro" id="IPR033910">
    <property type="entry name" value="GluRS_core"/>
</dbReference>
<dbReference type="InterPro" id="IPR014729">
    <property type="entry name" value="Rossmann-like_a/b/a_fold"/>
</dbReference>
<dbReference type="NCBIfam" id="TIGR00464">
    <property type="entry name" value="gltX_bact"/>
    <property type="match status" value="1"/>
</dbReference>
<dbReference type="PANTHER" id="PTHR43311">
    <property type="entry name" value="GLUTAMATE--TRNA LIGASE"/>
    <property type="match status" value="1"/>
</dbReference>
<dbReference type="PANTHER" id="PTHR43311:SF2">
    <property type="entry name" value="GLUTAMATE--TRNA LIGASE, MITOCHONDRIAL-RELATED"/>
    <property type="match status" value="1"/>
</dbReference>
<dbReference type="Pfam" id="PF19269">
    <property type="entry name" value="Anticodon_2"/>
    <property type="match status" value="1"/>
</dbReference>
<dbReference type="Pfam" id="PF00749">
    <property type="entry name" value="tRNA-synt_1c"/>
    <property type="match status" value="1"/>
</dbReference>
<dbReference type="PRINTS" id="PR00987">
    <property type="entry name" value="TRNASYNTHGLU"/>
</dbReference>
<dbReference type="SUPFAM" id="SSF48163">
    <property type="entry name" value="An anticodon-binding domain of class I aminoacyl-tRNA synthetases"/>
    <property type="match status" value="1"/>
</dbReference>
<dbReference type="SUPFAM" id="SSF52374">
    <property type="entry name" value="Nucleotidylyl transferase"/>
    <property type="match status" value="1"/>
</dbReference>
<dbReference type="PROSITE" id="PS00178">
    <property type="entry name" value="AA_TRNA_LIGASE_I"/>
    <property type="match status" value="1"/>
</dbReference>
<protein>
    <recommendedName>
        <fullName evidence="1">Glutamate--tRNA ligase</fullName>
        <ecNumber evidence="1">6.1.1.17</ecNumber>
    </recommendedName>
    <alternativeName>
        <fullName evidence="1">Glutamyl-tRNA synthetase</fullName>
        <shortName evidence="1">GluRS</shortName>
    </alternativeName>
</protein>
<proteinExistence type="inferred from homology"/>
<gene>
    <name evidence="1" type="primary">gltX</name>
    <name type="ordered locus">BAV2977</name>
</gene>
<feature type="chain" id="PRO_0000237342" description="Glutamate--tRNA ligase">
    <location>
        <begin position="1"/>
        <end position="467"/>
    </location>
</feature>
<feature type="region of interest" description="Disordered" evidence="2">
    <location>
        <begin position="118"/>
        <end position="141"/>
    </location>
</feature>
<feature type="short sequence motif" description="'HIGH' region" evidence="1">
    <location>
        <begin position="13"/>
        <end position="23"/>
    </location>
</feature>
<feature type="short sequence motif" description="'KMSKS' region" evidence="1">
    <location>
        <begin position="245"/>
        <end position="249"/>
    </location>
</feature>
<feature type="compositionally biased region" description="Basic and acidic residues" evidence="2">
    <location>
        <begin position="118"/>
        <end position="133"/>
    </location>
</feature>
<feature type="binding site" evidence="1">
    <location>
        <position position="248"/>
    </location>
    <ligand>
        <name>ATP</name>
        <dbReference type="ChEBI" id="CHEBI:30616"/>
    </ligand>
</feature>
<reference key="1">
    <citation type="journal article" date="2006" name="J. Bacteriol.">
        <title>Comparison of the genome sequence of the poultry pathogen Bordetella avium with those of B. bronchiseptica, B. pertussis, and B. parapertussis reveals extensive diversity in surface structures associated with host interaction.</title>
        <authorList>
            <person name="Sebaihia M."/>
            <person name="Preston A."/>
            <person name="Maskell D.J."/>
            <person name="Kuzmiak H."/>
            <person name="Connell T.D."/>
            <person name="King N.D."/>
            <person name="Orndorff P.E."/>
            <person name="Miyamoto D.M."/>
            <person name="Thomson N.R."/>
            <person name="Harris D."/>
            <person name="Goble A."/>
            <person name="Lord A."/>
            <person name="Murphy L."/>
            <person name="Quail M.A."/>
            <person name="Rutter S."/>
            <person name="Squares R."/>
            <person name="Squares S."/>
            <person name="Woodward J."/>
            <person name="Parkhill J."/>
            <person name="Temple L.M."/>
        </authorList>
    </citation>
    <scope>NUCLEOTIDE SEQUENCE [LARGE SCALE GENOMIC DNA]</scope>
    <source>
        <strain>197N</strain>
    </source>
</reference>